<organism>
    <name type="scientific">Saccharomyces cerevisiae (strain ATCC 204508 / S288c)</name>
    <name type="common">Baker's yeast</name>
    <dbReference type="NCBI Taxonomy" id="559292"/>
    <lineage>
        <taxon>Eukaryota</taxon>
        <taxon>Fungi</taxon>
        <taxon>Dikarya</taxon>
        <taxon>Ascomycota</taxon>
        <taxon>Saccharomycotina</taxon>
        <taxon>Saccharomycetes</taxon>
        <taxon>Saccharomycetales</taxon>
        <taxon>Saccharomycetaceae</taxon>
        <taxon>Saccharomyces</taxon>
    </lineage>
</organism>
<gene>
    <name type="primary">IZH3</name>
    <name type="ordered locus">YLR023C</name>
</gene>
<accession>Q07959</accession>
<accession>D6VY25</accession>
<proteinExistence type="evidence at protein level"/>
<keyword id="KW-0256">Endoplasmic reticulum</keyword>
<keyword id="KW-0325">Glycoprotein</keyword>
<keyword id="KW-0472">Membrane</keyword>
<keyword id="KW-1185">Reference proteome</keyword>
<keyword id="KW-0812">Transmembrane</keyword>
<keyword id="KW-1133">Transmembrane helix</keyword>
<feature type="chain" id="PRO_0000240375" description="ADIPOR-like receptor IZH3">
    <location>
        <begin position="1"/>
        <end position="543"/>
    </location>
</feature>
<feature type="topological domain" description="Lumenal" evidence="1">
    <location>
        <begin position="1"/>
        <end position="259"/>
    </location>
</feature>
<feature type="transmembrane region" description="Helical" evidence="1">
    <location>
        <begin position="260"/>
        <end position="280"/>
    </location>
</feature>
<feature type="topological domain" description="Cytoplasmic" evidence="1">
    <location>
        <begin position="281"/>
        <end position="295"/>
    </location>
</feature>
<feature type="transmembrane region" description="Helical" evidence="1">
    <location>
        <begin position="296"/>
        <end position="316"/>
    </location>
</feature>
<feature type="topological domain" description="Lumenal" evidence="1">
    <location>
        <begin position="317"/>
        <end position="330"/>
    </location>
</feature>
<feature type="transmembrane region" description="Helical" evidence="1">
    <location>
        <begin position="331"/>
        <end position="353"/>
    </location>
</feature>
<feature type="topological domain" description="Cytoplasmic" evidence="1">
    <location>
        <begin position="354"/>
        <end position="357"/>
    </location>
</feature>
<feature type="transmembrane region" description="Helical" evidence="1">
    <location>
        <begin position="358"/>
        <end position="378"/>
    </location>
</feature>
<feature type="topological domain" description="Lumenal" evidence="1">
    <location>
        <begin position="379"/>
        <end position="395"/>
    </location>
</feature>
<feature type="transmembrane region" description="Helical" evidence="1">
    <location>
        <begin position="396"/>
        <end position="416"/>
    </location>
</feature>
<feature type="topological domain" description="Cytoplasmic" evidence="1">
    <location>
        <begin position="417"/>
        <end position="425"/>
    </location>
</feature>
<feature type="transmembrane region" description="Helical" evidence="1">
    <location>
        <begin position="426"/>
        <end position="446"/>
    </location>
</feature>
<feature type="topological domain" description="Lumenal" evidence="1">
    <location>
        <begin position="447"/>
        <end position="505"/>
    </location>
</feature>
<feature type="transmembrane region" description="Helical" evidence="1">
    <location>
        <begin position="506"/>
        <end position="526"/>
    </location>
</feature>
<feature type="topological domain" description="Cytoplasmic" evidence="1">
    <location>
        <begin position="527"/>
        <end position="543"/>
    </location>
</feature>
<feature type="glycosylation site" description="N-linked (GlcNAc...) asparagine" evidence="1">
    <location>
        <position position="45"/>
    </location>
</feature>
<feature type="glycosylation site" description="N-linked (GlcNAc...) asparagine" evidence="1">
    <location>
        <position position="123"/>
    </location>
</feature>
<feature type="glycosylation site" description="N-linked (GlcNAc...) asparagine" evidence="1">
    <location>
        <position position="153"/>
    </location>
</feature>
<feature type="glycosylation site" description="N-linked (GlcNAc...) asparagine" evidence="1">
    <location>
        <position position="256"/>
    </location>
</feature>
<feature type="glycosylation site" description="N-linked (GlcNAc...) asparagine" evidence="1">
    <location>
        <position position="319"/>
    </location>
</feature>
<evidence type="ECO:0000255" key="1"/>
<evidence type="ECO:0000269" key="2">
    <source>
    </source>
</evidence>
<evidence type="ECO:0000305" key="3"/>
<protein>
    <recommendedName>
        <fullName>ADIPOR-like receptor IZH3</fullName>
    </recommendedName>
    <alternativeName>
        <fullName>Implicated in zinc homeostasis protein 3</fullName>
    </alternativeName>
</protein>
<name>IZH3_YEAST</name>
<comment type="function">
    <text evidence="2">ADIPOR-like receptor involved in zinc metabolism either by altering membrane sterol content or by directly altering cellular zinc levels.</text>
</comment>
<comment type="subcellular location">
    <subcellularLocation>
        <location evidence="3">Endoplasmic reticulum membrane</location>
        <topology evidence="3">Multi-pass membrane protein</topology>
    </subcellularLocation>
</comment>
<comment type="similarity">
    <text evidence="3">Belongs to the ADIPOR family.</text>
</comment>
<reference key="1">
    <citation type="journal article" date="1997" name="Nature">
        <title>The nucleotide sequence of Saccharomyces cerevisiae chromosome XII.</title>
        <authorList>
            <person name="Johnston M."/>
            <person name="Hillier L.W."/>
            <person name="Riles L."/>
            <person name="Albermann K."/>
            <person name="Andre B."/>
            <person name="Ansorge W."/>
            <person name="Benes V."/>
            <person name="Brueckner M."/>
            <person name="Delius H."/>
            <person name="Dubois E."/>
            <person name="Duesterhoeft A."/>
            <person name="Entian K.-D."/>
            <person name="Floeth M."/>
            <person name="Goffeau A."/>
            <person name="Hebling U."/>
            <person name="Heumann K."/>
            <person name="Heuss-Neitzel D."/>
            <person name="Hilbert H."/>
            <person name="Hilger F."/>
            <person name="Kleine K."/>
            <person name="Koetter P."/>
            <person name="Louis E.J."/>
            <person name="Messenguy F."/>
            <person name="Mewes H.-W."/>
            <person name="Miosga T."/>
            <person name="Moestl D."/>
            <person name="Mueller-Auer S."/>
            <person name="Nentwich U."/>
            <person name="Obermaier B."/>
            <person name="Piravandi E."/>
            <person name="Pohl T.M."/>
            <person name="Portetelle D."/>
            <person name="Purnelle B."/>
            <person name="Rechmann S."/>
            <person name="Rieger M."/>
            <person name="Rinke M."/>
            <person name="Rose M."/>
            <person name="Scharfe M."/>
            <person name="Scherens B."/>
            <person name="Scholler P."/>
            <person name="Schwager C."/>
            <person name="Schwarz S."/>
            <person name="Underwood A.P."/>
            <person name="Urrestarazu L.A."/>
            <person name="Vandenbol M."/>
            <person name="Verhasselt P."/>
            <person name="Vierendeels F."/>
            <person name="Voet M."/>
            <person name="Volckaert G."/>
            <person name="Voss H."/>
            <person name="Wambutt R."/>
            <person name="Wedler E."/>
            <person name="Wedler H."/>
            <person name="Zimmermann F.K."/>
            <person name="Zollner A."/>
            <person name="Hani J."/>
            <person name="Hoheisel J.D."/>
        </authorList>
    </citation>
    <scope>NUCLEOTIDE SEQUENCE [LARGE SCALE GENOMIC DNA]</scope>
    <source>
        <strain>ATCC 204508 / S288c</strain>
    </source>
</reference>
<reference key="2">
    <citation type="journal article" date="2014" name="G3 (Bethesda)">
        <title>The reference genome sequence of Saccharomyces cerevisiae: Then and now.</title>
        <authorList>
            <person name="Engel S.R."/>
            <person name="Dietrich F.S."/>
            <person name="Fisk D.G."/>
            <person name="Binkley G."/>
            <person name="Balakrishnan R."/>
            <person name="Costanzo M.C."/>
            <person name="Dwight S.S."/>
            <person name="Hitz B.C."/>
            <person name="Karra K."/>
            <person name="Nash R.S."/>
            <person name="Weng S."/>
            <person name="Wong E.D."/>
            <person name="Lloyd P."/>
            <person name="Skrzypek M.S."/>
            <person name="Miyasato S.R."/>
            <person name="Simison M."/>
            <person name="Cherry J.M."/>
        </authorList>
    </citation>
    <scope>GENOME REANNOTATION</scope>
    <source>
        <strain>ATCC 204508 / S288c</strain>
    </source>
</reference>
<reference key="3">
    <citation type="journal article" date="2003" name="Nature">
        <title>Global analysis of protein localization in budding yeast.</title>
        <authorList>
            <person name="Huh W.-K."/>
            <person name="Falvo J.V."/>
            <person name="Gerke L.C."/>
            <person name="Carroll A.S."/>
            <person name="Howson R.W."/>
            <person name="Weissman J.S."/>
            <person name="O'Shea E.K."/>
        </authorList>
    </citation>
    <scope>SUBCELLULAR LOCATION [LARGE SCALE ANALYSIS]</scope>
</reference>
<reference key="4">
    <citation type="journal article" date="2004" name="Proc. Natl. Acad. Sci. U.S.A.">
        <title>Metalloregulation of yeast membrane steroid receptor homologs.</title>
        <authorList>
            <person name="Lyons T.J."/>
            <person name="Villa N.Y."/>
            <person name="Regalla L.M."/>
            <person name="Kupchak B.R."/>
            <person name="Vagstad A."/>
            <person name="Eide D.J."/>
        </authorList>
    </citation>
    <scope>FUNCTION</scope>
</reference>
<sequence length="543" mass="62571">MMDSSSKSLTQYIPSPMGSLSRLKQKGVDNFQKVKKSGKSIYNYNYSKFVPHPFSTIDESVKHSESGRYDDLEIIRPTKEKEVTSSVYKRNSGKSLNTESQFSLGDSDAATLVNSVATFKLNNASTSTSLVSSSSTVCSQAKSSLRSPTSRLNDTKIKEENNYISSVKDYCGPMRKSMVKTEILIEEPLNPTTDIKSFINSYNHGKAYSLGETQHLHYYQLPFPWRENRYIIHGYRFYNTHSKSLLSIFNWYGWHNETSNIWSHLLGAIYIIYLAIYDFPQSEVWRNSQVPPQARWIVFMFLAAALKCMLSSVFWHTFNGTSFLKLRSKFACVDYSGITILITASILTTEFVTMYSCYWAMYTYMSISLALGVFGVFMNWSPRFDRPEARPLRIRFFILLATMGVLSFLHLIFLTDLHYAATLFSPVTYKSVVWYLVGVVFYGSFIPERFRSDVQVDKTIPTNYELSTDLEIITKQREIHFREVPTAHSKCSSCPSHAKSFKSLWWVDYFGCSHTFWHFFVVLGVIGHYRAILDMFAKRWILS</sequence>
<dbReference type="EMBL" id="Z73195">
    <property type="protein sequence ID" value="CAA97546.1"/>
    <property type="molecule type" value="Genomic_DNA"/>
</dbReference>
<dbReference type="EMBL" id="BK006945">
    <property type="protein sequence ID" value="DAA09341.1"/>
    <property type="molecule type" value="Genomic_DNA"/>
</dbReference>
<dbReference type="PIR" id="S64850">
    <property type="entry name" value="S64850"/>
</dbReference>
<dbReference type="RefSeq" id="NP_013123.1">
    <property type="nucleotide sequence ID" value="NM_001181910.1"/>
</dbReference>
<dbReference type="SMR" id="Q07959"/>
<dbReference type="BioGRID" id="31297">
    <property type="interactions" value="110"/>
</dbReference>
<dbReference type="FunCoup" id="Q07959">
    <property type="interactions" value="65"/>
</dbReference>
<dbReference type="IntAct" id="Q07959">
    <property type="interactions" value="2"/>
</dbReference>
<dbReference type="MINT" id="Q07959"/>
<dbReference type="STRING" id="4932.YLR023C"/>
<dbReference type="GlyCosmos" id="Q07959">
    <property type="glycosylation" value="5 sites, No reported glycans"/>
</dbReference>
<dbReference type="GlyGen" id="Q07959">
    <property type="glycosylation" value="5 sites"/>
</dbReference>
<dbReference type="iPTMnet" id="Q07959"/>
<dbReference type="PaxDb" id="4932-YLR023C"/>
<dbReference type="PeptideAtlas" id="Q07959"/>
<dbReference type="EnsemblFungi" id="YLR023C_mRNA">
    <property type="protein sequence ID" value="YLR023C"/>
    <property type="gene ID" value="YLR023C"/>
</dbReference>
<dbReference type="GeneID" id="850710"/>
<dbReference type="KEGG" id="sce:YLR023C"/>
<dbReference type="AGR" id="SGD:S000004013"/>
<dbReference type="SGD" id="S000004013">
    <property type="gene designation" value="IZH3"/>
</dbReference>
<dbReference type="VEuPathDB" id="FungiDB:YLR023C"/>
<dbReference type="eggNOG" id="KOG0748">
    <property type="taxonomic scope" value="Eukaryota"/>
</dbReference>
<dbReference type="HOGENOM" id="CLU_025943_0_1_1"/>
<dbReference type="InParanoid" id="Q07959"/>
<dbReference type="OMA" id="CSHTLWH"/>
<dbReference type="OrthoDB" id="5585746at2759"/>
<dbReference type="BioCyc" id="YEAST:G3O-32184-MONOMER"/>
<dbReference type="BioGRID-ORCS" id="850710">
    <property type="hits" value="2 hits in 10 CRISPR screens"/>
</dbReference>
<dbReference type="PRO" id="PR:Q07959"/>
<dbReference type="Proteomes" id="UP000002311">
    <property type="component" value="Chromosome XII"/>
</dbReference>
<dbReference type="RNAct" id="Q07959">
    <property type="molecule type" value="protein"/>
</dbReference>
<dbReference type="GO" id="GO:0005783">
    <property type="term" value="C:endoplasmic reticulum"/>
    <property type="evidence" value="ECO:0007005"/>
    <property type="project" value="SGD"/>
</dbReference>
<dbReference type="GO" id="GO:0005789">
    <property type="term" value="C:endoplasmic reticulum membrane"/>
    <property type="evidence" value="ECO:0007669"/>
    <property type="project" value="UniProtKB-SubCell"/>
</dbReference>
<dbReference type="GO" id="GO:0038023">
    <property type="term" value="F:signaling receptor activity"/>
    <property type="evidence" value="ECO:0000318"/>
    <property type="project" value="GO_Central"/>
</dbReference>
<dbReference type="GO" id="GO:0006882">
    <property type="term" value="P:intracellular zinc ion homeostasis"/>
    <property type="evidence" value="ECO:0000315"/>
    <property type="project" value="SGD"/>
</dbReference>
<dbReference type="InterPro" id="IPR004254">
    <property type="entry name" value="AdipoR/HlyIII-related"/>
</dbReference>
<dbReference type="PANTHER" id="PTHR20855:SF97">
    <property type="entry name" value="ADIPOR-LIKE RECEPTOR IZH3-RELATED"/>
    <property type="match status" value="1"/>
</dbReference>
<dbReference type="PANTHER" id="PTHR20855">
    <property type="entry name" value="ADIPOR/PROGESTIN RECEPTOR-RELATED"/>
    <property type="match status" value="1"/>
</dbReference>
<dbReference type="Pfam" id="PF03006">
    <property type="entry name" value="HlyIII"/>
    <property type="match status" value="1"/>
</dbReference>